<keyword id="KW-0903">Direct protein sequencing</keyword>
<keyword id="KW-0325">Glycoprotein</keyword>
<keyword id="KW-0964">Secreted</keyword>
<keyword id="KW-0732">Signal</keyword>
<evidence type="ECO:0000255" key="1"/>
<evidence type="ECO:0000269" key="2">
    <source>
    </source>
</evidence>
<proteinExistence type="evidence at protein level"/>
<feature type="signal peptide" evidence="1">
    <location>
        <begin position="1"/>
        <end position="16"/>
    </location>
</feature>
<feature type="chain" id="PRO_0000429542" description="Upsalin">
    <location>
        <begin position="17"/>
        <end position="125"/>
    </location>
</feature>
<accession>K0P7H2</accession>
<reference key="1">
    <citation type="journal article" date="2012" name="ChemBioChem">
        <title>Novel molluskan biomineralization proteins retrieved from proteomics: a case study with Upsalin.</title>
        <authorList>
            <person name="Ramos-Silva P."/>
            <person name="Benhamada S."/>
            <person name="Le Roy N."/>
            <person name="Marie B."/>
            <person name="Guichard N."/>
            <person name="Zanella-Cleon I."/>
            <person name="Plasseraud L."/>
            <person name="Corneillat M."/>
            <person name="Alcaraz G."/>
            <person name="Kaandorp J."/>
            <person name="Marin F."/>
        </authorList>
    </citation>
    <scope>NUCLEOTIDE SEQUENCE [MRNA]</scope>
    <scope>PROTEIN SEQUENCE OF 31-61; 66-90 AND 109-123</scope>
    <scope>SUBCELLULAR LOCATION</scope>
    <scope>TISSUE SPECIFICITY</scope>
    <scope>GLYCOSYLATION</scope>
    <source>
        <tissue>Mantle</tissue>
        <tissue>Shell</tissue>
    </source>
</reference>
<reference key="2">
    <citation type="journal article" date="2010" name="ChemBioChem">
        <title>Proteomic analysis of the acid-soluble nacre matrix of the bivalve Unio pictorum: detection of novel carbonic anhydrase and putative protease inhibitor proteins.</title>
        <authorList>
            <person name="Marie B."/>
            <person name="Zanella-Cleon I."/>
            <person name="Le Roy N."/>
            <person name="Becchi M."/>
            <person name="Luquet G."/>
            <person name="Marin F."/>
        </authorList>
    </citation>
    <scope>PROTEIN SEQUENCE OF 91-100 AND 107-123</scope>
</reference>
<organism>
    <name type="scientific">Unio pictorum</name>
    <name type="common">Painter's mussel</name>
    <dbReference type="NCBI Taxonomy" id="55837"/>
    <lineage>
        <taxon>Eukaryota</taxon>
        <taxon>Metazoa</taxon>
        <taxon>Spiralia</taxon>
        <taxon>Lophotrochozoa</taxon>
        <taxon>Mollusca</taxon>
        <taxon>Bivalvia</taxon>
        <taxon>Autobranchia</taxon>
        <taxon>Heteroconchia</taxon>
        <taxon>Palaeoheterodonta</taxon>
        <taxon>Unionida</taxon>
        <taxon>Unionoidea</taxon>
        <taxon>Unionidae</taxon>
        <taxon>Unioninae</taxon>
        <taxon>Unio</taxon>
    </lineage>
</organism>
<comment type="subcellular location">
    <subcellularLocation>
        <location evidence="2">Secreted</location>
    </subcellularLocation>
</comment>
<comment type="tissue specificity">
    <text evidence="2">Expressed at highest levels in mantle, followed by adductor muscle. Found in the nacreous shell layer (at protein level).</text>
</comment>
<comment type="PTM">
    <text evidence="2">Weakly glycosylated.</text>
</comment>
<name>UPSA_UNIPI</name>
<sequence>MFPTHVLLIVIACVTAFVYGGGGKRPRVCRYSSDGPVCRTNIECSDPEVHCYRKPGHPYGRCCVKRPYACPRGSSNRYDDPEGFPPLVQRCPYAYPFFCRPGYYCRTKTGGSTEFYGVCCPLRVG</sequence>
<protein>
    <recommendedName>
        <fullName>Upsalin</fullName>
    </recommendedName>
</protein>
<dbReference type="EMBL" id="HE994141">
    <property type="protein sequence ID" value="CCM44291.1"/>
    <property type="molecule type" value="mRNA"/>
</dbReference>
<dbReference type="GO" id="GO:0005576">
    <property type="term" value="C:extracellular region"/>
    <property type="evidence" value="ECO:0007669"/>
    <property type="project" value="UniProtKB-SubCell"/>
</dbReference>